<dbReference type="EMBL" id="AE005174">
    <property type="protein sequence ID" value="AAG54977.1"/>
    <property type="molecule type" value="Genomic_DNA"/>
</dbReference>
<dbReference type="EMBL" id="BA000007">
    <property type="protein sequence ID" value="BAB34104.1"/>
    <property type="molecule type" value="Genomic_DNA"/>
</dbReference>
<dbReference type="PIR" id="A90714">
    <property type="entry name" value="A90714"/>
</dbReference>
<dbReference type="PIR" id="E85564">
    <property type="entry name" value="E85564"/>
</dbReference>
<dbReference type="RefSeq" id="NP_308708.1">
    <property type="nucleotide sequence ID" value="NC_002695.1"/>
</dbReference>
<dbReference type="RefSeq" id="WP_001044880.1">
    <property type="nucleotide sequence ID" value="NZ_VOAI01000012.1"/>
</dbReference>
<dbReference type="STRING" id="155864.Z0790"/>
<dbReference type="GeneID" id="917042"/>
<dbReference type="KEGG" id="ece:Z0790"/>
<dbReference type="KEGG" id="ecs:ECs_0681"/>
<dbReference type="PATRIC" id="fig|386585.9.peg.793"/>
<dbReference type="eggNOG" id="COG2888">
    <property type="taxonomic scope" value="Bacteria"/>
</dbReference>
<dbReference type="HOGENOM" id="CLU_101353_1_0_6"/>
<dbReference type="OMA" id="HHHLAFY"/>
<dbReference type="Proteomes" id="UP000000558">
    <property type="component" value="Chromosome"/>
</dbReference>
<dbReference type="Proteomes" id="UP000002519">
    <property type="component" value="Chromosome"/>
</dbReference>
<dbReference type="InterPro" id="IPR009912">
    <property type="entry name" value="DUF1451"/>
</dbReference>
<dbReference type="NCBIfam" id="NF008261">
    <property type="entry name" value="PRK11032.1"/>
    <property type="match status" value="1"/>
</dbReference>
<dbReference type="Pfam" id="PF07295">
    <property type="entry name" value="DUF1451"/>
    <property type="match status" value="1"/>
</dbReference>
<name>YBEL_ECO57</name>
<organism>
    <name type="scientific">Escherichia coli O157:H7</name>
    <dbReference type="NCBI Taxonomy" id="83334"/>
    <lineage>
        <taxon>Bacteria</taxon>
        <taxon>Pseudomonadati</taxon>
        <taxon>Pseudomonadota</taxon>
        <taxon>Gammaproteobacteria</taxon>
        <taxon>Enterobacterales</taxon>
        <taxon>Enterobacteriaceae</taxon>
        <taxon>Escherichia</taxon>
    </lineage>
</organism>
<sequence>MNKVAQYYRELVASLSERLRNGERDIDALVEQARERVIKTGELTRTEVDELTRAVRRDLEEFAMSYEESLKEESDSVFMRVIKESLWQELADITDKTQLEWREVFQDLNHHGVYHSGEVVGLGNLVCEKCHFHLPIYTPEVLTLCPKCGHDQFQRRPFEP</sequence>
<protein>
    <recommendedName>
        <fullName>Uncharacterized protein YbeL</fullName>
    </recommendedName>
</protein>
<feature type="chain" id="PRO_0000168679" description="Uncharacterized protein YbeL">
    <location>
        <begin position="1"/>
        <end position="160"/>
    </location>
</feature>
<reference key="1">
    <citation type="journal article" date="2001" name="Nature">
        <title>Genome sequence of enterohaemorrhagic Escherichia coli O157:H7.</title>
        <authorList>
            <person name="Perna N.T."/>
            <person name="Plunkett G. III"/>
            <person name="Burland V."/>
            <person name="Mau B."/>
            <person name="Glasner J.D."/>
            <person name="Rose D.J."/>
            <person name="Mayhew G.F."/>
            <person name="Evans P.S."/>
            <person name="Gregor J."/>
            <person name="Kirkpatrick H.A."/>
            <person name="Posfai G."/>
            <person name="Hackett J."/>
            <person name="Klink S."/>
            <person name="Boutin A."/>
            <person name="Shao Y."/>
            <person name="Miller L."/>
            <person name="Grotbeck E.J."/>
            <person name="Davis N.W."/>
            <person name="Lim A."/>
            <person name="Dimalanta E.T."/>
            <person name="Potamousis K."/>
            <person name="Apodaca J."/>
            <person name="Anantharaman T.S."/>
            <person name="Lin J."/>
            <person name="Yen G."/>
            <person name="Schwartz D.C."/>
            <person name="Welch R.A."/>
            <person name="Blattner F.R."/>
        </authorList>
    </citation>
    <scope>NUCLEOTIDE SEQUENCE [LARGE SCALE GENOMIC DNA]</scope>
    <source>
        <strain>O157:H7 / EDL933 / ATCC 700927 / EHEC</strain>
    </source>
</reference>
<reference key="2">
    <citation type="journal article" date="2001" name="DNA Res.">
        <title>Complete genome sequence of enterohemorrhagic Escherichia coli O157:H7 and genomic comparison with a laboratory strain K-12.</title>
        <authorList>
            <person name="Hayashi T."/>
            <person name="Makino K."/>
            <person name="Ohnishi M."/>
            <person name="Kurokawa K."/>
            <person name="Ishii K."/>
            <person name="Yokoyama K."/>
            <person name="Han C.-G."/>
            <person name="Ohtsubo E."/>
            <person name="Nakayama K."/>
            <person name="Murata T."/>
            <person name="Tanaka M."/>
            <person name="Tobe T."/>
            <person name="Iida T."/>
            <person name="Takami H."/>
            <person name="Honda T."/>
            <person name="Sasakawa C."/>
            <person name="Ogasawara N."/>
            <person name="Yasunaga T."/>
            <person name="Kuhara S."/>
            <person name="Shiba T."/>
            <person name="Hattori M."/>
            <person name="Shinagawa H."/>
        </authorList>
    </citation>
    <scope>NUCLEOTIDE SEQUENCE [LARGE SCALE GENOMIC DNA]</scope>
    <source>
        <strain>O157:H7 / Sakai / RIMD 0509952 / EHEC</strain>
    </source>
</reference>
<gene>
    <name type="primary">ybeL</name>
    <name type="ordered locus">Z0790</name>
    <name type="ordered locus">ECs0681</name>
</gene>
<accession>P0AAU1</accession>
<accession>P46129</accession>
<accession>P77654</accession>
<keyword id="KW-1185">Reference proteome</keyword>
<proteinExistence type="predicted"/>